<reference key="1">
    <citation type="journal article" date="2006" name="Proc. Natl. Acad. Sci. U.S.A.">
        <title>Genome sequence of Synechococcus CC9311: insights into adaptation to a coastal environment.</title>
        <authorList>
            <person name="Palenik B."/>
            <person name="Ren Q."/>
            <person name="Dupont C.L."/>
            <person name="Myers G.S."/>
            <person name="Heidelberg J.F."/>
            <person name="Badger J.H."/>
            <person name="Madupu R."/>
            <person name="Nelson W.C."/>
            <person name="Brinkac L.M."/>
            <person name="Dodson R.J."/>
            <person name="Durkin A.S."/>
            <person name="Daugherty S.C."/>
            <person name="Sullivan S.A."/>
            <person name="Khouri H."/>
            <person name="Mohamoud Y."/>
            <person name="Halpin R."/>
            <person name="Paulsen I.T."/>
        </authorList>
    </citation>
    <scope>NUCLEOTIDE SEQUENCE [LARGE SCALE GENOMIC DNA]</scope>
    <source>
        <strain>CC9311</strain>
    </source>
</reference>
<accession>Q0I762</accession>
<dbReference type="EC" id="2.7.1.170" evidence="1"/>
<dbReference type="EMBL" id="CP000435">
    <property type="protein sequence ID" value="ABI45811.1"/>
    <property type="molecule type" value="Genomic_DNA"/>
</dbReference>
<dbReference type="RefSeq" id="WP_011620416.1">
    <property type="nucleotide sequence ID" value="NC_008319.1"/>
</dbReference>
<dbReference type="SMR" id="Q0I762"/>
<dbReference type="STRING" id="64471.sync_2516"/>
<dbReference type="KEGG" id="syg:sync_2516"/>
<dbReference type="eggNOG" id="COG2377">
    <property type="taxonomic scope" value="Bacteria"/>
</dbReference>
<dbReference type="HOGENOM" id="CLU_038782_1_0_3"/>
<dbReference type="OrthoDB" id="9763949at2"/>
<dbReference type="UniPathway" id="UPA00343"/>
<dbReference type="UniPathway" id="UPA00544"/>
<dbReference type="Proteomes" id="UP000001961">
    <property type="component" value="Chromosome"/>
</dbReference>
<dbReference type="GO" id="GO:0005524">
    <property type="term" value="F:ATP binding"/>
    <property type="evidence" value="ECO:0007669"/>
    <property type="project" value="UniProtKB-UniRule"/>
</dbReference>
<dbReference type="GO" id="GO:0016301">
    <property type="term" value="F:kinase activity"/>
    <property type="evidence" value="ECO:0007669"/>
    <property type="project" value="UniProtKB-KW"/>
</dbReference>
<dbReference type="GO" id="GO:0016773">
    <property type="term" value="F:phosphotransferase activity, alcohol group as acceptor"/>
    <property type="evidence" value="ECO:0007669"/>
    <property type="project" value="UniProtKB-UniRule"/>
</dbReference>
<dbReference type="GO" id="GO:0097175">
    <property type="term" value="P:1,6-anhydro-N-acetyl-beta-muramic acid catabolic process"/>
    <property type="evidence" value="ECO:0007669"/>
    <property type="project" value="UniProtKB-UniRule"/>
</dbReference>
<dbReference type="GO" id="GO:0006040">
    <property type="term" value="P:amino sugar metabolic process"/>
    <property type="evidence" value="ECO:0007669"/>
    <property type="project" value="InterPro"/>
</dbReference>
<dbReference type="GO" id="GO:0009254">
    <property type="term" value="P:peptidoglycan turnover"/>
    <property type="evidence" value="ECO:0007669"/>
    <property type="project" value="UniProtKB-UniRule"/>
</dbReference>
<dbReference type="Gene3D" id="3.30.420.40">
    <property type="match status" value="2"/>
</dbReference>
<dbReference type="HAMAP" id="MF_01270">
    <property type="entry name" value="AnhMurNAc_kinase"/>
    <property type="match status" value="1"/>
</dbReference>
<dbReference type="InterPro" id="IPR005338">
    <property type="entry name" value="Anhydro_N_Ac-Mur_kinase"/>
</dbReference>
<dbReference type="InterPro" id="IPR043129">
    <property type="entry name" value="ATPase_NBD"/>
</dbReference>
<dbReference type="NCBIfam" id="NF007145">
    <property type="entry name" value="PRK09585.2-5"/>
    <property type="match status" value="1"/>
</dbReference>
<dbReference type="PANTHER" id="PTHR30605">
    <property type="entry name" value="ANHYDRO-N-ACETYLMURAMIC ACID KINASE"/>
    <property type="match status" value="1"/>
</dbReference>
<dbReference type="PANTHER" id="PTHR30605:SF0">
    <property type="entry name" value="ANHYDRO-N-ACETYLMURAMIC ACID KINASE"/>
    <property type="match status" value="1"/>
</dbReference>
<dbReference type="Pfam" id="PF03702">
    <property type="entry name" value="AnmK"/>
    <property type="match status" value="1"/>
</dbReference>
<dbReference type="SUPFAM" id="SSF53067">
    <property type="entry name" value="Actin-like ATPase domain"/>
    <property type="match status" value="1"/>
</dbReference>
<feature type="chain" id="PRO_1000214176" description="Anhydro-N-acetylmuramic acid kinase">
    <location>
        <begin position="1"/>
        <end position="384"/>
    </location>
</feature>
<feature type="binding site" evidence="1">
    <location>
        <begin position="9"/>
        <end position="16"/>
    </location>
    <ligand>
        <name>ATP</name>
        <dbReference type="ChEBI" id="CHEBI:30616"/>
    </ligand>
</feature>
<organism>
    <name type="scientific">Synechococcus sp. (strain CC9311)</name>
    <dbReference type="NCBI Taxonomy" id="64471"/>
    <lineage>
        <taxon>Bacteria</taxon>
        <taxon>Bacillati</taxon>
        <taxon>Cyanobacteriota</taxon>
        <taxon>Cyanophyceae</taxon>
        <taxon>Synechococcales</taxon>
        <taxon>Synechococcaceae</taxon>
        <taxon>Synechococcus</taxon>
    </lineage>
</organism>
<gene>
    <name evidence="1" type="primary">anmK</name>
    <name type="ordered locus">sync_2516</name>
</gene>
<proteinExistence type="inferred from homology"/>
<comment type="function">
    <text evidence="1">Catalyzes the specific phosphorylation of 1,6-anhydro-N-acetylmuramic acid (anhMurNAc) with the simultaneous cleavage of the 1,6-anhydro ring, generating MurNAc-6-P. Is required for the utilization of anhMurNAc either imported from the medium or derived from its own cell wall murein, and thus plays a role in cell wall recycling.</text>
</comment>
<comment type="catalytic activity">
    <reaction evidence="1">
        <text>1,6-anhydro-N-acetyl-beta-muramate + ATP + H2O = N-acetyl-D-muramate 6-phosphate + ADP + H(+)</text>
        <dbReference type="Rhea" id="RHEA:24952"/>
        <dbReference type="ChEBI" id="CHEBI:15377"/>
        <dbReference type="ChEBI" id="CHEBI:15378"/>
        <dbReference type="ChEBI" id="CHEBI:30616"/>
        <dbReference type="ChEBI" id="CHEBI:58690"/>
        <dbReference type="ChEBI" id="CHEBI:58722"/>
        <dbReference type="ChEBI" id="CHEBI:456216"/>
        <dbReference type="EC" id="2.7.1.170"/>
    </reaction>
</comment>
<comment type="pathway">
    <text evidence="1">Amino-sugar metabolism; 1,6-anhydro-N-acetylmuramate degradation.</text>
</comment>
<comment type="pathway">
    <text evidence="1">Cell wall biogenesis; peptidoglycan recycling.</text>
</comment>
<comment type="similarity">
    <text evidence="1">Belongs to the anhydro-N-acetylmuramic acid kinase family.</text>
</comment>
<evidence type="ECO:0000255" key="1">
    <source>
        <dbReference type="HAMAP-Rule" id="MF_01270"/>
    </source>
</evidence>
<name>ANMK_SYNS3</name>
<protein>
    <recommendedName>
        <fullName evidence="1">Anhydro-N-acetylmuramic acid kinase</fullName>
        <ecNumber evidence="1">2.7.1.170</ecNumber>
    </recommendedName>
    <alternativeName>
        <fullName evidence="1">AnhMurNAc kinase</fullName>
    </alternativeName>
</protein>
<keyword id="KW-0067">ATP-binding</keyword>
<keyword id="KW-0119">Carbohydrate metabolism</keyword>
<keyword id="KW-0418">Kinase</keyword>
<keyword id="KW-0547">Nucleotide-binding</keyword>
<keyword id="KW-1185">Reference proteome</keyword>
<keyword id="KW-0808">Transferase</keyword>
<sequence length="384" mass="41353">MRVLGLMSGTSADGVDAVLVELSGSADHPRWSLLRSASLDYPTSTRQLILAVGQGEAKTASSLLNLSETITKIQAAAALQCDPEEQAQLVGCHGQTLWHRPPKRAGTGELQRGASWQMLQAPLLAQLLNRPVIFDFRAADLALGGQGAPLVPKADAALLGRTKGWRALLNLGGIANLTLIPPDAGPDRLQPVRGWDCGPANSLIDLAMEQFSEGEESCDQGGRLAETGHCDEALILRWLAEPYFQLNPPKSTGREVFGRADLTRRLRDMQGQPIANQIATLTAFSAAVVAQDLQQLSNQNHPLPIELVVAGGGSKNLTLMRELNTRCRGLRLRRSDELQLPSQSREAMVFALLAWWHHLGYPGNAPAITGAQHEVVLGVRVNPA</sequence>